<gene>
    <name evidence="3" type="primary">MFS</name>
    <name type="ORF">LEMA_P002610.1</name>
</gene>
<organism>
    <name type="scientific">Leptosphaeria maculans (strain JN3 / isolate v23.1.3 / race Av1-4-5-6-7-8)</name>
    <name type="common">Blackleg fungus</name>
    <name type="synonym">Phoma lingam</name>
    <dbReference type="NCBI Taxonomy" id="985895"/>
    <lineage>
        <taxon>Eukaryota</taxon>
        <taxon>Fungi</taxon>
        <taxon>Dikarya</taxon>
        <taxon>Ascomycota</taxon>
        <taxon>Pezizomycotina</taxon>
        <taxon>Dothideomycetes</taxon>
        <taxon>Pleosporomycetidae</taxon>
        <taxon>Pleosporales</taxon>
        <taxon>Pleosporineae</taxon>
        <taxon>Leptosphaeriaceae</taxon>
        <taxon>Plenodomus</taxon>
        <taxon>Plenodomus lingam/Leptosphaeria maculans species complex</taxon>
    </lineage>
</organism>
<dbReference type="EMBL" id="FP929139">
    <property type="protein sequence ID" value="CBY01474.1"/>
    <property type="molecule type" value="Genomic_DNA"/>
</dbReference>
<dbReference type="RefSeq" id="XP_003844953.1">
    <property type="nucleotide sequence ID" value="XM_003844905.1"/>
</dbReference>
<dbReference type="SMR" id="E5AE35"/>
<dbReference type="EnsemblFungi" id="CBY01474">
    <property type="protein sequence ID" value="CBY01474"/>
    <property type="gene ID" value="LEMA_P002610.1"/>
</dbReference>
<dbReference type="VEuPathDB" id="FungiDB:LEMA_P002610.1"/>
<dbReference type="eggNOG" id="KOG0254">
    <property type="taxonomic scope" value="Eukaryota"/>
</dbReference>
<dbReference type="HOGENOM" id="CLU_000960_22_1_1"/>
<dbReference type="InParanoid" id="E5AE35"/>
<dbReference type="OMA" id="ATYNAKW"/>
<dbReference type="OrthoDB" id="10021397at2759"/>
<dbReference type="Proteomes" id="UP000002668">
    <property type="component" value="Genome"/>
</dbReference>
<dbReference type="GO" id="GO:0005886">
    <property type="term" value="C:plasma membrane"/>
    <property type="evidence" value="ECO:0007669"/>
    <property type="project" value="UniProtKB-SubCell"/>
</dbReference>
<dbReference type="GO" id="GO:0022857">
    <property type="term" value="F:transmembrane transporter activity"/>
    <property type="evidence" value="ECO:0007669"/>
    <property type="project" value="InterPro"/>
</dbReference>
<dbReference type="Gene3D" id="1.20.1250.20">
    <property type="entry name" value="MFS general substrate transporter like domains"/>
    <property type="match status" value="1"/>
</dbReference>
<dbReference type="InterPro" id="IPR011701">
    <property type="entry name" value="MFS"/>
</dbReference>
<dbReference type="InterPro" id="IPR020846">
    <property type="entry name" value="MFS_dom"/>
</dbReference>
<dbReference type="InterPro" id="IPR036259">
    <property type="entry name" value="MFS_trans_sf"/>
</dbReference>
<dbReference type="PANTHER" id="PTHR23501">
    <property type="entry name" value="MAJOR FACILITATOR SUPERFAMILY"/>
    <property type="match status" value="1"/>
</dbReference>
<dbReference type="PANTHER" id="PTHR23501:SF12">
    <property type="entry name" value="MAJOR FACILITATOR SUPERFAMILY (MFS) PROFILE DOMAIN-CONTAINING PROTEIN-RELATED"/>
    <property type="match status" value="1"/>
</dbReference>
<dbReference type="Pfam" id="PF07690">
    <property type="entry name" value="MFS_1"/>
    <property type="match status" value="1"/>
</dbReference>
<dbReference type="SUPFAM" id="SSF103473">
    <property type="entry name" value="MFS general substrate transporter"/>
    <property type="match status" value="1"/>
</dbReference>
<dbReference type="PROSITE" id="PS50850">
    <property type="entry name" value="MFS"/>
    <property type="match status" value="1"/>
</dbReference>
<keyword id="KW-1003">Cell membrane</keyword>
<keyword id="KW-0472">Membrane</keyword>
<keyword id="KW-1185">Reference proteome</keyword>
<keyword id="KW-0812">Transmembrane</keyword>
<keyword id="KW-1133">Transmembrane helix</keyword>
<keyword id="KW-0813">Transport</keyword>
<comment type="function">
    <text evidence="2 5">MFS-type transporter; part of the gene cluster that mediates the biosynthesis of phomenoic acid, a long chain aliphatic carboxylic acid that does not appear to be essential for pathogenicity but may play a role in allowing to outcompete other fungi in the environmental niche via its antifungal properties (PubMed:23396262). Is probably involved in the efflux of phomenoic acid (Probable).</text>
</comment>
<comment type="subcellular location">
    <subcellularLocation>
        <location evidence="4">Cell membrane</location>
        <topology evidence="1">Multi-pass membrane protein</topology>
    </subcellularLocation>
</comment>
<comment type="induction">
    <text evidence="2">Expression is positively regulated by the phomenoic acid biosynthesis cluster-specific transcription regulator C6TF.</text>
</comment>
<comment type="similarity">
    <text evidence="4">Belongs to the major facilitator superfamily. TCR/Tet family.</text>
</comment>
<proteinExistence type="evidence at transcript level"/>
<reference key="1">
    <citation type="journal article" date="2011" name="Nat. Commun.">
        <title>Effector diversification within compartments of the Leptosphaeria maculans genome affected by Repeat-Induced Point mutations.</title>
        <authorList>
            <person name="Rouxel T."/>
            <person name="Grandaubert J."/>
            <person name="Hane J.K."/>
            <person name="Hoede C."/>
            <person name="van de Wouw A.P."/>
            <person name="Couloux A."/>
            <person name="Dominguez V."/>
            <person name="Anthouard V."/>
            <person name="Bally P."/>
            <person name="Bourras S."/>
            <person name="Cozijnsen A.J."/>
            <person name="Ciuffetti L.M."/>
            <person name="Degrave A."/>
            <person name="Dilmaghani A."/>
            <person name="Duret L."/>
            <person name="Fudal I."/>
            <person name="Goodwin S.B."/>
            <person name="Gout L."/>
            <person name="Glaser N."/>
            <person name="Linglin J."/>
            <person name="Kema G.H.J."/>
            <person name="Lapalu N."/>
            <person name="Lawrence C.B."/>
            <person name="May K."/>
            <person name="Meyer M."/>
            <person name="Ollivier B."/>
            <person name="Poulain J."/>
            <person name="Schoch C.L."/>
            <person name="Simon A."/>
            <person name="Spatafora J.W."/>
            <person name="Stachowiak A."/>
            <person name="Turgeon B.G."/>
            <person name="Tyler B.M."/>
            <person name="Vincent D."/>
            <person name="Weissenbach J."/>
            <person name="Amselem J."/>
            <person name="Quesneville H."/>
            <person name="Oliver R.P."/>
            <person name="Wincker P."/>
            <person name="Balesdent M.-H."/>
            <person name="Howlett B.J."/>
        </authorList>
    </citation>
    <scope>NUCLEOTIDE SEQUENCE [LARGE SCALE GENOMIC DNA]</scope>
    <source>
        <strain>JN3 / isolate v23.1.3 / race Av1-4-5-6-7-8</strain>
    </source>
</reference>
<reference key="2">
    <citation type="journal article" date="2013" name="Fungal Genet. Biol.">
        <title>A gene cluster responsible for biosynthesis of phomenoic acid in the plant pathogenic fungus, Leptosphaeria maculans.</title>
        <authorList>
            <person name="Elliott C.E."/>
            <person name="Callahan D.L."/>
            <person name="Schwenk D."/>
            <person name="Nett M."/>
            <person name="Hoffmeister D."/>
            <person name="Howlett B.J."/>
        </authorList>
    </citation>
    <scope>IDENTIFICATION</scope>
    <scope>FUNCTION</scope>
    <scope>INDUCTION</scope>
</reference>
<protein>
    <recommendedName>
        <fullName evidence="3">Phomenoic acid biosynthesis cluster MFS-type transporter</fullName>
    </recommendedName>
</protein>
<name>MFS_LEPMJ</name>
<evidence type="ECO:0000255" key="1"/>
<evidence type="ECO:0000269" key="2">
    <source>
    </source>
</evidence>
<evidence type="ECO:0000303" key="3">
    <source>
    </source>
</evidence>
<evidence type="ECO:0000305" key="4"/>
<evidence type="ECO:0000305" key="5">
    <source>
    </source>
</evidence>
<feature type="chain" id="PRO_0000446537" description="Phomenoic acid biosynthesis cluster MFS-type transporter">
    <location>
        <begin position="1"/>
        <end position="628"/>
    </location>
</feature>
<feature type="transmembrane region" description="Helical" evidence="1">
    <location>
        <begin position="102"/>
        <end position="122"/>
    </location>
</feature>
<feature type="transmembrane region" description="Helical" evidence="1">
    <location>
        <begin position="150"/>
        <end position="170"/>
    </location>
</feature>
<feature type="transmembrane region" description="Helical" evidence="1">
    <location>
        <begin position="174"/>
        <end position="194"/>
    </location>
</feature>
<feature type="transmembrane region" description="Helical" evidence="1">
    <location>
        <begin position="204"/>
        <end position="224"/>
    </location>
</feature>
<feature type="transmembrane region" description="Helical" evidence="1">
    <location>
        <begin position="232"/>
        <end position="252"/>
    </location>
</feature>
<feature type="transmembrane region" description="Helical" evidence="1">
    <location>
        <begin position="262"/>
        <end position="282"/>
    </location>
</feature>
<feature type="transmembrane region" description="Helical" evidence="1">
    <location>
        <begin position="302"/>
        <end position="322"/>
    </location>
</feature>
<feature type="transmembrane region" description="Helical" evidence="1">
    <location>
        <begin position="329"/>
        <end position="349"/>
    </location>
</feature>
<feature type="transmembrane region" description="Helical" evidence="1">
    <location>
        <begin position="375"/>
        <end position="395"/>
    </location>
</feature>
<feature type="transmembrane region" description="Helical" evidence="1">
    <location>
        <begin position="407"/>
        <end position="427"/>
    </location>
</feature>
<feature type="transmembrane region" description="Helical" evidence="1">
    <location>
        <begin position="435"/>
        <end position="455"/>
    </location>
</feature>
<feature type="transmembrane region" description="Helical" evidence="1">
    <location>
        <begin position="488"/>
        <end position="508"/>
    </location>
</feature>
<feature type="transmembrane region" description="Helical" evidence="1">
    <location>
        <begin position="524"/>
        <end position="544"/>
    </location>
</feature>
<feature type="transmembrane region" description="Helical" evidence="1">
    <location>
        <begin position="595"/>
        <end position="615"/>
    </location>
</feature>
<sequence>MSTLCAFPVPYSTIEVLNIVLPYRTYSARLLYLHAPLGNHLPFCHRSYNVLHLRQDCDSHMYSAGNDVRLSQEAVTMSDQRSHDTTADQSARDASSLDTRKIHGFPWFLLVISVLSSIFLYALDNTIVADIIPAIANDFSSINDLGWLSVGFVIGGVAVIMPLGKLYGILNTKWLYITSVVLFMAASAVCGAAPDMNAEIVGRVFAGAGGIGMYIGTMILLSINTSDQERPAYLSLVGLVWGIGTVLGPVIGGSFEKVDWRWAFYLNLVIGALLFPVWFFLLPSFHPAKHLSLNKRLSQFDFVGAILSIGAFVTTIMPINFGGTTYEWNSGTIIALFVVSGVLWIAFAVQQSLTLFTTPADRMFPVQFLKNKEAMLLFICAAAINSAVFVPIYFIPIYFQFSRGDGALDSAIRLLPLIFLLCATILVNGKLMSRFGYYMPWYLVGGVFCLIANVFLCELHPVAAVLVRYTDYKTALLDATTSQSYIYGFEALLGLGAGGSVQAGYAVIQTVVPATDLGYAVSFIMIAQIGGIALGLACASAVFINGATNSLRVLLPLLSDSELQSAISGTGGRFLETLDDNTRVQVIDAVVNNLAKAFIVAYAGAAVSLVASLGFSRKRVFLPTAAAA</sequence>
<accession>E5AE35</accession>